<dbReference type="EMBL" id="M30644">
    <property type="protein sequence ID" value="AAA37621.1"/>
    <property type="molecule type" value="mRNA"/>
</dbReference>
<dbReference type="EMBL" id="AF065903">
    <property type="protein sequence ID" value="AAC17503.1"/>
    <property type="molecule type" value="mRNA"/>
</dbReference>
<dbReference type="EMBL" id="AF065904">
    <property type="protein sequence ID" value="AAC17504.1"/>
    <property type="molecule type" value="mRNA"/>
</dbReference>
<dbReference type="EMBL" id="AF065905">
    <property type="protein sequence ID" value="AAC17505.1"/>
    <property type="molecule type" value="mRNA"/>
</dbReference>
<dbReference type="CCDS" id="CCDS17320.1"/>
<dbReference type="PIR" id="C37360">
    <property type="entry name" value="C37360"/>
</dbReference>
<dbReference type="RefSeq" id="NP_032032.1">
    <property type="nucleotide sequence ID" value="NM_008006.2"/>
</dbReference>
<dbReference type="SMR" id="P15655"/>
<dbReference type="BioGRID" id="199647">
    <property type="interactions" value="7"/>
</dbReference>
<dbReference type="CORUM" id="P15655"/>
<dbReference type="FunCoup" id="P15655">
    <property type="interactions" value="1506"/>
</dbReference>
<dbReference type="STRING" id="10090.ENSMUSP00000143094"/>
<dbReference type="iPTMnet" id="P15655"/>
<dbReference type="PhosphoSitePlus" id="P15655"/>
<dbReference type="PaxDb" id="10090-ENSMUSP00000037694"/>
<dbReference type="PeptideAtlas" id="P15655"/>
<dbReference type="ProteomicsDB" id="266837"/>
<dbReference type="Pumba" id="P15655"/>
<dbReference type="Antibodypedia" id="3433">
    <property type="antibodies" value="1266 antibodies from 48 providers"/>
</dbReference>
<dbReference type="DNASU" id="14173"/>
<dbReference type="Ensembl" id="ENSMUST00000138563.9">
    <property type="protein sequence ID" value="ENSMUSP00000122227.3"/>
    <property type="gene ID" value="ENSMUSG00000037225.14"/>
</dbReference>
<dbReference type="Ensembl" id="ENSMUST00000200585.5">
    <property type="protein sequence ID" value="ENSMUSP00000143094.2"/>
    <property type="gene ID" value="ENSMUSG00000037225.14"/>
</dbReference>
<dbReference type="GeneID" id="14173"/>
<dbReference type="KEGG" id="mmu:14173"/>
<dbReference type="UCSC" id="uc008pap.2">
    <property type="organism name" value="mouse"/>
</dbReference>
<dbReference type="AGR" id="MGI:95516"/>
<dbReference type="CTD" id="2247"/>
<dbReference type="MGI" id="MGI:95516">
    <property type="gene designation" value="Fgf2"/>
</dbReference>
<dbReference type="VEuPathDB" id="HostDB:ENSMUSG00000037225"/>
<dbReference type="eggNOG" id="KOG3885">
    <property type="taxonomic scope" value="Eukaryota"/>
</dbReference>
<dbReference type="GeneTree" id="ENSGT00940000161583"/>
<dbReference type="HOGENOM" id="CLU_081609_5_1_1"/>
<dbReference type="InParanoid" id="P15655"/>
<dbReference type="OMA" id="KGVCSNR"/>
<dbReference type="OrthoDB" id="5987799at2759"/>
<dbReference type="PhylomeDB" id="P15655"/>
<dbReference type="TreeFam" id="TF317805"/>
<dbReference type="Reactome" id="R-MMU-109704">
    <property type="pathway name" value="PI3K Cascade"/>
</dbReference>
<dbReference type="Reactome" id="R-MMU-1257604">
    <property type="pathway name" value="PIP3 activates AKT signaling"/>
</dbReference>
<dbReference type="Reactome" id="R-MMU-190322">
    <property type="pathway name" value="FGFR4 ligand binding and activation"/>
</dbReference>
<dbReference type="Reactome" id="R-MMU-190370">
    <property type="pathway name" value="FGFR1b ligand binding and activation"/>
</dbReference>
<dbReference type="Reactome" id="R-MMU-190372">
    <property type="pathway name" value="FGFR3c ligand binding and activation"/>
</dbReference>
<dbReference type="Reactome" id="R-MMU-190373">
    <property type="pathway name" value="FGFR1c ligand binding and activation"/>
</dbReference>
<dbReference type="Reactome" id="R-MMU-190375">
    <property type="pathway name" value="FGFR2c ligand binding and activation"/>
</dbReference>
<dbReference type="Reactome" id="R-MMU-190377">
    <property type="pathway name" value="FGFR2b ligand binding and activation"/>
</dbReference>
<dbReference type="Reactome" id="R-MMU-3000170">
    <property type="pathway name" value="Syndecan interactions"/>
</dbReference>
<dbReference type="Reactome" id="R-MMU-5654219">
    <property type="pathway name" value="Phospholipase C-mediated cascade: FGFR1"/>
</dbReference>
<dbReference type="Reactome" id="R-MMU-5654221">
    <property type="pathway name" value="Phospholipase C-mediated cascade, FGFR2"/>
</dbReference>
<dbReference type="Reactome" id="R-MMU-5654227">
    <property type="pathway name" value="Phospholipase C-mediated cascade, FGFR3"/>
</dbReference>
<dbReference type="Reactome" id="R-MMU-5654228">
    <property type="pathway name" value="Phospholipase C-mediated cascade, FGFR4"/>
</dbReference>
<dbReference type="Reactome" id="R-MMU-5654687">
    <property type="pathway name" value="Downstream signaling of activated FGFR1"/>
</dbReference>
<dbReference type="Reactome" id="R-MMU-5654688">
    <property type="pathway name" value="SHC-mediated cascade:FGFR1"/>
</dbReference>
<dbReference type="Reactome" id="R-MMU-5654689">
    <property type="pathway name" value="PI-3K cascade:FGFR1"/>
</dbReference>
<dbReference type="Reactome" id="R-MMU-5654693">
    <property type="pathway name" value="FRS-mediated FGFR1 signaling"/>
</dbReference>
<dbReference type="Reactome" id="R-MMU-5654695">
    <property type="pathway name" value="PI-3K cascade:FGFR2"/>
</dbReference>
<dbReference type="Reactome" id="R-MMU-5654699">
    <property type="pathway name" value="SHC-mediated cascade:FGFR2"/>
</dbReference>
<dbReference type="Reactome" id="R-MMU-5654700">
    <property type="pathway name" value="FRS-mediated FGFR2 signaling"/>
</dbReference>
<dbReference type="Reactome" id="R-MMU-5654704">
    <property type="pathway name" value="SHC-mediated cascade:FGFR3"/>
</dbReference>
<dbReference type="Reactome" id="R-MMU-5654706">
    <property type="pathway name" value="FRS-mediated FGFR3 signaling"/>
</dbReference>
<dbReference type="Reactome" id="R-MMU-5654710">
    <property type="pathway name" value="PI-3K cascade:FGFR3"/>
</dbReference>
<dbReference type="Reactome" id="R-MMU-5654712">
    <property type="pathway name" value="FRS-mediated FGFR4 signaling"/>
</dbReference>
<dbReference type="Reactome" id="R-MMU-5654719">
    <property type="pathway name" value="SHC-mediated cascade:FGFR4"/>
</dbReference>
<dbReference type="Reactome" id="R-MMU-5654720">
    <property type="pathway name" value="PI-3K cascade:FGFR4"/>
</dbReference>
<dbReference type="Reactome" id="R-MMU-5654726">
    <property type="pathway name" value="Negative regulation of FGFR1 signaling"/>
</dbReference>
<dbReference type="Reactome" id="R-MMU-5654727">
    <property type="pathway name" value="Negative regulation of FGFR2 signaling"/>
</dbReference>
<dbReference type="Reactome" id="R-MMU-5654732">
    <property type="pathway name" value="Negative regulation of FGFR3 signaling"/>
</dbReference>
<dbReference type="Reactome" id="R-MMU-5654733">
    <property type="pathway name" value="Negative regulation of FGFR4 signaling"/>
</dbReference>
<dbReference type="Reactome" id="R-MMU-5658623">
    <property type="pathway name" value="FGFRL1 modulation of FGFR1 signaling"/>
</dbReference>
<dbReference type="Reactome" id="R-MMU-5673001">
    <property type="pathway name" value="RAF/MAP kinase cascade"/>
</dbReference>
<dbReference type="Reactome" id="R-MMU-6811558">
    <property type="pathway name" value="PI5P, PP2A and IER3 Regulate PI3K/AKT Signaling"/>
</dbReference>
<dbReference type="Reactome" id="R-MMU-9839397">
    <property type="pathway name" value="TGFBR3 regulates FGF2 signaling"/>
</dbReference>
<dbReference type="BioGRID-ORCS" id="14173">
    <property type="hits" value="0 hits in 62 CRISPR screens"/>
</dbReference>
<dbReference type="PRO" id="PR:P15655"/>
<dbReference type="Proteomes" id="UP000000589">
    <property type="component" value="Chromosome 3"/>
</dbReference>
<dbReference type="RNAct" id="P15655">
    <property type="molecule type" value="protein"/>
</dbReference>
<dbReference type="Bgee" id="ENSMUSG00000037225">
    <property type="expression patterns" value="Expressed in mesenchyme of tongue and 150 other cell types or tissues"/>
</dbReference>
<dbReference type="ExpressionAtlas" id="P15655">
    <property type="expression patterns" value="baseline and differential"/>
</dbReference>
<dbReference type="GO" id="GO:0005615">
    <property type="term" value="C:extracellular space"/>
    <property type="evidence" value="ECO:0000314"/>
    <property type="project" value="MGI"/>
</dbReference>
<dbReference type="GO" id="GO:0005634">
    <property type="term" value="C:nucleus"/>
    <property type="evidence" value="ECO:0007669"/>
    <property type="project" value="UniProtKB-SubCell"/>
</dbReference>
<dbReference type="GO" id="GO:0042056">
    <property type="term" value="F:chemoattractant activity"/>
    <property type="evidence" value="ECO:0007669"/>
    <property type="project" value="Ensembl"/>
</dbReference>
<dbReference type="GO" id="GO:0019956">
    <property type="term" value="F:chemokine binding"/>
    <property type="evidence" value="ECO:0007669"/>
    <property type="project" value="Ensembl"/>
</dbReference>
<dbReference type="GO" id="GO:0005125">
    <property type="term" value="F:cytokine activity"/>
    <property type="evidence" value="ECO:0007669"/>
    <property type="project" value="Ensembl"/>
</dbReference>
<dbReference type="GO" id="GO:0005104">
    <property type="term" value="F:fibroblast growth factor receptor binding"/>
    <property type="evidence" value="ECO:0000266"/>
    <property type="project" value="MGI"/>
</dbReference>
<dbReference type="GO" id="GO:0008083">
    <property type="term" value="F:growth factor activity"/>
    <property type="evidence" value="ECO:0000314"/>
    <property type="project" value="MGI"/>
</dbReference>
<dbReference type="GO" id="GO:0008201">
    <property type="term" value="F:heparin binding"/>
    <property type="evidence" value="ECO:0007669"/>
    <property type="project" value="UniProtKB-KW"/>
</dbReference>
<dbReference type="GO" id="GO:0062072">
    <property type="term" value="F:histone H3K9me2/3 reader activity"/>
    <property type="evidence" value="ECO:0007669"/>
    <property type="project" value="Ensembl"/>
</dbReference>
<dbReference type="GO" id="GO:0042802">
    <property type="term" value="F:identical protein binding"/>
    <property type="evidence" value="ECO:0007669"/>
    <property type="project" value="Ensembl"/>
</dbReference>
<dbReference type="GO" id="GO:0005178">
    <property type="term" value="F:integrin binding"/>
    <property type="evidence" value="ECO:0000250"/>
    <property type="project" value="UniProtKB"/>
</dbReference>
<dbReference type="GO" id="GO:0090722">
    <property type="term" value="F:receptor-receptor interaction"/>
    <property type="evidence" value="ECO:0007669"/>
    <property type="project" value="Ensembl"/>
</dbReference>
<dbReference type="GO" id="GO:0001525">
    <property type="term" value="P:angiogenesis"/>
    <property type="evidence" value="ECO:0000316"/>
    <property type="project" value="MGI"/>
</dbReference>
<dbReference type="GO" id="GO:0060978">
    <property type="term" value="P:angiogenesis involved in coronary vascular morphogenesis"/>
    <property type="evidence" value="ECO:0007669"/>
    <property type="project" value="Ensembl"/>
</dbReference>
<dbReference type="GO" id="GO:0048149">
    <property type="term" value="P:behavioral response to ethanol"/>
    <property type="evidence" value="ECO:0007669"/>
    <property type="project" value="Ensembl"/>
</dbReference>
<dbReference type="GO" id="GO:0001658">
    <property type="term" value="P:branching involved in ureteric bud morphogenesis"/>
    <property type="evidence" value="ECO:0000250"/>
    <property type="project" value="UniProtKB"/>
</dbReference>
<dbReference type="GO" id="GO:0060070">
    <property type="term" value="P:canonical Wnt signaling pathway"/>
    <property type="evidence" value="ECO:0000314"/>
    <property type="project" value="MGI"/>
</dbReference>
<dbReference type="GO" id="GO:0060038">
    <property type="term" value="P:cardiac muscle cell proliferation"/>
    <property type="evidence" value="ECO:0000304"/>
    <property type="project" value="DFLAT"/>
</dbReference>
<dbReference type="GO" id="GO:0002042">
    <property type="term" value="P:cell migration involved in sprouting angiogenesis"/>
    <property type="evidence" value="ECO:0007669"/>
    <property type="project" value="Ensembl"/>
</dbReference>
<dbReference type="GO" id="GO:0008283">
    <property type="term" value="P:cell population proliferation"/>
    <property type="evidence" value="ECO:0000314"/>
    <property type="project" value="MGI"/>
</dbReference>
<dbReference type="GO" id="GO:0071260">
    <property type="term" value="P:cellular response to mechanical stimulus"/>
    <property type="evidence" value="ECO:0007669"/>
    <property type="project" value="Ensembl"/>
</dbReference>
<dbReference type="GO" id="GO:0021930">
    <property type="term" value="P:cerebellar granule cell precursor proliferation"/>
    <property type="evidence" value="ECO:0000314"/>
    <property type="project" value="MGI"/>
</dbReference>
<dbReference type="GO" id="GO:0060591">
    <property type="term" value="P:chondroblast differentiation"/>
    <property type="evidence" value="ECO:0007669"/>
    <property type="project" value="Ensembl"/>
</dbReference>
<dbReference type="GO" id="GO:0060128">
    <property type="term" value="P:corticotropin hormone secreting cell differentiation"/>
    <property type="evidence" value="ECO:0000314"/>
    <property type="project" value="MGI"/>
</dbReference>
<dbReference type="GO" id="GO:0009792">
    <property type="term" value="P:embryo development ending in birth or egg hatching"/>
    <property type="evidence" value="ECO:0007669"/>
    <property type="project" value="Ensembl"/>
</dbReference>
<dbReference type="GO" id="GO:0043542">
    <property type="term" value="P:endothelial cell migration"/>
    <property type="evidence" value="ECO:0000314"/>
    <property type="project" value="MGI"/>
</dbReference>
<dbReference type="GO" id="GO:0001935">
    <property type="term" value="P:endothelial cell proliferation"/>
    <property type="evidence" value="ECO:0000314"/>
    <property type="project" value="MGI"/>
</dbReference>
<dbReference type="GO" id="GO:0050673">
    <property type="term" value="P:epithelial cell proliferation"/>
    <property type="evidence" value="ECO:0000314"/>
    <property type="project" value="MGI"/>
</dbReference>
<dbReference type="GO" id="GO:0070371">
    <property type="term" value="P:ERK1 and ERK2 cascade"/>
    <property type="evidence" value="ECO:0000314"/>
    <property type="project" value="MGI"/>
</dbReference>
<dbReference type="GO" id="GO:0008543">
    <property type="term" value="P:fibroblast growth factor receptor signaling pathway"/>
    <property type="evidence" value="ECO:0000266"/>
    <property type="project" value="MGI"/>
</dbReference>
<dbReference type="GO" id="GO:0010001">
    <property type="term" value="P:glial cell differentiation"/>
    <property type="evidence" value="ECO:0000315"/>
    <property type="project" value="MGI"/>
</dbReference>
<dbReference type="GO" id="GO:0014843">
    <property type="term" value="P:growth factor dependent regulation of skeletal muscle satellite cell proliferation"/>
    <property type="evidence" value="ECO:0007669"/>
    <property type="project" value="Ensembl"/>
</dbReference>
<dbReference type="GO" id="GO:0030214">
    <property type="term" value="P:hyaluronan catabolic process"/>
    <property type="evidence" value="ECO:0007669"/>
    <property type="project" value="Ensembl"/>
</dbReference>
<dbReference type="GO" id="GO:0042491">
    <property type="term" value="P:inner ear auditory receptor cell differentiation"/>
    <property type="evidence" value="ECO:0000314"/>
    <property type="project" value="MGI"/>
</dbReference>
<dbReference type="GO" id="GO:0030324">
    <property type="term" value="P:lung development"/>
    <property type="evidence" value="ECO:0000314"/>
    <property type="project" value="MGI"/>
</dbReference>
<dbReference type="GO" id="GO:1904977">
    <property type="term" value="P:lymphatic endothelial cell migration"/>
    <property type="evidence" value="ECO:0000314"/>
    <property type="project" value="MGI"/>
</dbReference>
<dbReference type="GO" id="GO:0060644">
    <property type="term" value="P:mammary gland epithelial cell differentiation"/>
    <property type="evidence" value="ECO:0000314"/>
    <property type="project" value="MGI"/>
</dbReference>
<dbReference type="GO" id="GO:0043537">
    <property type="term" value="P:negative regulation of blood vessel endothelial cell migration"/>
    <property type="evidence" value="ECO:0007669"/>
    <property type="project" value="Ensembl"/>
</dbReference>
<dbReference type="GO" id="GO:0008285">
    <property type="term" value="P:negative regulation of cell population proliferation"/>
    <property type="evidence" value="ECO:0000316"/>
    <property type="project" value="MGI"/>
</dbReference>
<dbReference type="GO" id="GO:0010764">
    <property type="term" value="P:negative regulation of fibroblast migration"/>
    <property type="evidence" value="ECO:0007669"/>
    <property type="project" value="Ensembl"/>
</dbReference>
<dbReference type="GO" id="GO:1903377">
    <property type="term" value="P:negative regulation of oxidative stress-induced neuron intrinsic apoptotic signaling pathway"/>
    <property type="evidence" value="ECO:0007669"/>
    <property type="project" value="Ensembl"/>
</dbReference>
<dbReference type="GO" id="GO:2000647">
    <property type="term" value="P:negative regulation of stem cell proliferation"/>
    <property type="evidence" value="ECO:0000316"/>
    <property type="project" value="MGI"/>
</dbReference>
<dbReference type="GO" id="GO:0061045">
    <property type="term" value="P:negative regulation of wound healing"/>
    <property type="evidence" value="ECO:0007669"/>
    <property type="project" value="Ensembl"/>
</dbReference>
<dbReference type="GO" id="GO:0007405">
    <property type="term" value="P:neuroblast proliferation"/>
    <property type="evidence" value="ECO:0000316"/>
    <property type="project" value="MGI"/>
</dbReference>
<dbReference type="GO" id="GO:0060563">
    <property type="term" value="P:neuroepithelial cell differentiation"/>
    <property type="evidence" value="ECO:0000314"/>
    <property type="project" value="MGI"/>
</dbReference>
<dbReference type="GO" id="GO:0001759">
    <property type="term" value="P:organ induction"/>
    <property type="evidence" value="ECO:0000314"/>
    <property type="project" value="MGI"/>
</dbReference>
<dbReference type="GO" id="GO:0001649">
    <property type="term" value="P:osteoblast differentiation"/>
    <property type="evidence" value="ECO:0000316"/>
    <property type="project" value="MGI"/>
</dbReference>
<dbReference type="GO" id="GO:0038001">
    <property type="term" value="P:paracrine signaling"/>
    <property type="evidence" value="ECO:0007669"/>
    <property type="project" value="Ensembl"/>
</dbReference>
<dbReference type="GO" id="GO:0043491">
    <property type="term" value="P:phosphatidylinositol 3-kinase/protein kinase B signal transduction"/>
    <property type="evidence" value="ECO:0000314"/>
    <property type="project" value="MGI"/>
</dbReference>
<dbReference type="GO" id="GO:0045766">
    <property type="term" value="P:positive regulation of angiogenesis"/>
    <property type="evidence" value="ECO:0000314"/>
    <property type="project" value="MGI"/>
</dbReference>
<dbReference type="GO" id="GO:1905555">
    <property type="term" value="P:positive regulation of blood vessel branching"/>
    <property type="evidence" value="ECO:0007669"/>
    <property type="project" value="Ensembl"/>
</dbReference>
<dbReference type="GO" id="GO:0043536">
    <property type="term" value="P:positive regulation of blood vessel endothelial cell migration"/>
    <property type="evidence" value="ECO:0000250"/>
    <property type="project" value="UniProtKB"/>
</dbReference>
<dbReference type="GO" id="GO:0090263">
    <property type="term" value="P:positive regulation of canonical Wnt signaling pathway"/>
    <property type="evidence" value="ECO:0000314"/>
    <property type="project" value="MGI"/>
</dbReference>
<dbReference type="GO" id="GO:0060045">
    <property type="term" value="P:positive regulation of cardiac muscle cell proliferation"/>
    <property type="evidence" value="ECO:0007669"/>
    <property type="project" value="Ensembl"/>
</dbReference>
<dbReference type="GO" id="GO:0051781">
    <property type="term" value="P:positive regulation of cell division"/>
    <property type="evidence" value="ECO:0007669"/>
    <property type="project" value="UniProtKB-KW"/>
</dbReference>
<dbReference type="GO" id="GO:0042660">
    <property type="term" value="P:positive regulation of cell fate specification"/>
    <property type="evidence" value="ECO:0000266"/>
    <property type="project" value="MGI"/>
</dbReference>
<dbReference type="GO" id="GO:0090050">
    <property type="term" value="P:positive regulation of cell migration involved in sprouting angiogenesis"/>
    <property type="evidence" value="ECO:0000250"/>
    <property type="project" value="UniProtKB"/>
</dbReference>
<dbReference type="GO" id="GO:0008284">
    <property type="term" value="P:positive regulation of cell population proliferation"/>
    <property type="evidence" value="ECO:0000314"/>
    <property type="project" value="MGI"/>
</dbReference>
<dbReference type="GO" id="GO:0021940">
    <property type="term" value="P:positive regulation of cerebellar granule cell precursor proliferation"/>
    <property type="evidence" value="ECO:0000314"/>
    <property type="project" value="MGI"/>
</dbReference>
<dbReference type="GO" id="GO:2000573">
    <property type="term" value="P:positive regulation of DNA biosynthetic process"/>
    <property type="evidence" value="ECO:0007669"/>
    <property type="project" value="Ensembl"/>
</dbReference>
<dbReference type="GO" id="GO:0045893">
    <property type="term" value="P:positive regulation of DNA-templated transcription"/>
    <property type="evidence" value="ECO:0000304"/>
    <property type="project" value="DFLAT"/>
</dbReference>
<dbReference type="GO" id="GO:2000546">
    <property type="term" value="P:positive regulation of endothelial cell chemotaxis to fibroblast growth factor"/>
    <property type="evidence" value="ECO:0007669"/>
    <property type="project" value="Ensembl"/>
</dbReference>
<dbReference type="GO" id="GO:0010595">
    <property type="term" value="P:positive regulation of endothelial cell migration"/>
    <property type="evidence" value="ECO:0000314"/>
    <property type="project" value="MGI"/>
</dbReference>
<dbReference type="GO" id="GO:0001938">
    <property type="term" value="P:positive regulation of endothelial cell proliferation"/>
    <property type="evidence" value="ECO:0000314"/>
    <property type="project" value="MGI"/>
</dbReference>
<dbReference type="GO" id="GO:0050679">
    <property type="term" value="P:positive regulation of epithelial cell proliferation"/>
    <property type="evidence" value="ECO:0000314"/>
    <property type="project" value="MGI"/>
</dbReference>
<dbReference type="GO" id="GO:1905278">
    <property type="term" value="P:positive regulation of epithelial tube formation"/>
    <property type="evidence" value="ECO:0007669"/>
    <property type="project" value="Ensembl"/>
</dbReference>
<dbReference type="GO" id="GO:0070374">
    <property type="term" value="P:positive regulation of ERK1 and ERK2 cascade"/>
    <property type="evidence" value="ECO:0000314"/>
    <property type="project" value="UniProtKB"/>
</dbReference>
<dbReference type="GO" id="GO:0010628">
    <property type="term" value="P:positive regulation of gene expression"/>
    <property type="evidence" value="ECO:0000314"/>
    <property type="project" value="MGI"/>
</dbReference>
<dbReference type="GO" id="GO:0045609">
    <property type="term" value="P:positive regulation of inner ear auditory receptor cell differentiation"/>
    <property type="evidence" value="ECO:0000314"/>
    <property type="project" value="MGI"/>
</dbReference>
<dbReference type="GO" id="GO:1902748">
    <property type="term" value="P:positive regulation of lens fiber cell differentiation"/>
    <property type="evidence" value="ECO:0000250"/>
    <property type="project" value="UniProtKB"/>
</dbReference>
<dbReference type="GO" id="GO:0043410">
    <property type="term" value="P:positive regulation of MAPK cascade"/>
    <property type="evidence" value="ECO:0000314"/>
    <property type="project" value="MGI"/>
</dbReference>
<dbReference type="GO" id="GO:0002052">
    <property type="term" value="P:positive regulation of neuroblast proliferation"/>
    <property type="evidence" value="ECO:0000316"/>
    <property type="project" value="MGI"/>
</dbReference>
<dbReference type="GO" id="GO:1902913">
    <property type="term" value="P:positive regulation of neuroepithelial cell differentiation"/>
    <property type="evidence" value="ECO:0000314"/>
    <property type="project" value="MGI"/>
</dbReference>
<dbReference type="GO" id="GO:0045669">
    <property type="term" value="P:positive regulation of osteoblast differentiation"/>
    <property type="evidence" value="ECO:0000316"/>
    <property type="project" value="MGI"/>
</dbReference>
<dbReference type="GO" id="GO:0051897">
    <property type="term" value="P:positive regulation of phosphatidylinositol 3-kinase/protein kinase B signal transduction"/>
    <property type="evidence" value="ECO:0000314"/>
    <property type="project" value="MGI"/>
</dbReference>
<dbReference type="GO" id="GO:0001934">
    <property type="term" value="P:positive regulation of protein phosphorylation"/>
    <property type="evidence" value="ECO:0000314"/>
    <property type="project" value="UniProtKB"/>
</dbReference>
<dbReference type="GO" id="GO:1903672">
    <property type="term" value="P:positive regulation of sprouting angiogenesis"/>
    <property type="evidence" value="ECO:0000250"/>
    <property type="project" value="UniProtKB"/>
</dbReference>
<dbReference type="GO" id="GO:2000738">
    <property type="term" value="P:positive regulation of stem cell differentiation"/>
    <property type="evidence" value="ECO:0000314"/>
    <property type="project" value="MGI"/>
</dbReference>
<dbReference type="GO" id="GO:2000648">
    <property type="term" value="P:positive regulation of stem cell proliferation"/>
    <property type="evidence" value="ECO:0000314"/>
    <property type="project" value="MGI"/>
</dbReference>
<dbReference type="GO" id="GO:0045944">
    <property type="term" value="P:positive regulation of transcription by RNA polymerase II"/>
    <property type="evidence" value="ECO:0000314"/>
    <property type="project" value="MGI"/>
</dbReference>
<dbReference type="GO" id="GO:1904707">
    <property type="term" value="P:positive regulation of vascular associated smooth muscle cell proliferation"/>
    <property type="evidence" value="ECO:0007669"/>
    <property type="project" value="Ensembl"/>
</dbReference>
<dbReference type="GO" id="GO:1905564">
    <property type="term" value="P:positive regulation of vascular endothelial cell proliferation"/>
    <property type="evidence" value="ECO:0007669"/>
    <property type="project" value="Ensembl"/>
</dbReference>
<dbReference type="GO" id="GO:0051726">
    <property type="term" value="P:regulation of cell cycle"/>
    <property type="evidence" value="ECO:0000314"/>
    <property type="project" value="MGI"/>
</dbReference>
<dbReference type="GO" id="GO:0046668">
    <property type="term" value="P:regulation of retinal cell programmed cell death"/>
    <property type="evidence" value="ECO:0000314"/>
    <property type="project" value="MGI"/>
</dbReference>
<dbReference type="GO" id="GO:0051209">
    <property type="term" value="P:release of sequestered calcium ion into cytosol"/>
    <property type="evidence" value="ECO:0007669"/>
    <property type="project" value="Ensembl"/>
</dbReference>
<dbReference type="GO" id="GO:0048678">
    <property type="term" value="P:response to axon injury"/>
    <property type="evidence" value="ECO:0000315"/>
    <property type="project" value="MGI"/>
</dbReference>
<dbReference type="GO" id="GO:1904567">
    <property type="term" value="P:response to wortmannin"/>
    <property type="evidence" value="ECO:0007669"/>
    <property type="project" value="Ensembl"/>
</dbReference>
<dbReference type="GO" id="GO:0048864">
    <property type="term" value="P:stem cell development"/>
    <property type="evidence" value="ECO:0000315"/>
    <property type="project" value="BHF-UCL"/>
</dbReference>
<dbReference type="GO" id="GO:0048863">
    <property type="term" value="P:stem cell differentiation"/>
    <property type="evidence" value="ECO:0000314"/>
    <property type="project" value="MGI"/>
</dbReference>
<dbReference type="GO" id="GO:0072089">
    <property type="term" value="P:stem cell proliferation"/>
    <property type="evidence" value="ECO:0000314"/>
    <property type="project" value="MGI"/>
</dbReference>
<dbReference type="GO" id="GO:0021762">
    <property type="term" value="P:substantia nigra development"/>
    <property type="evidence" value="ECO:0000315"/>
    <property type="project" value="MGI"/>
</dbReference>
<dbReference type="GO" id="GO:0060129">
    <property type="term" value="P:thyroid-stimulating hormone-secreting cell differentiation"/>
    <property type="evidence" value="ECO:0000314"/>
    <property type="project" value="MGI"/>
</dbReference>
<dbReference type="GO" id="GO:0006366">
    <property type="term" value="P:transcription by RNA polymerase II"/>
    <property type="evidence" value="ECO:0000314"/>
    <property type="project" value="MGI"/>
</dbReference>
<dbReference type="GO" id="GO:0042060">
    <property type="term" value="P:wound healing"/>
    <property type="evidence" value="ECO:0007669"/>
    <property type="project" value="Ensembl"/>
</dbReference>
<dbReference type="CDD" id="cd23314">
    <property type="entry name" value="beta-trefoil_FGF2"/>
    <property type="match status" value="1"/>
</dbReference>
<dbReference type="FunFam" id="2.80.10.50:FF:000020">
    <property type="entry name" value="Fibroblast growth factor 1"/>
    <property type="match status" value="1"/>
</dbReference>
<dbReference type="Gene3D" id="2.80.10.50">
    <property type="match status" value="1"/>
</dbReference>
<dbReference type="InterPro" id="IPR002209">
    <property type="entry name" value="Fibroblast_GF_fam"/>
</dbReference>
<dbReference type="InterPro" id="IPR008996">
    <property type="entry name" value="IL1/FGF"/>
</dbReference>
<dbReference type="PANTHER" id="PTHR11486">
    <property type="entry name" value="FIBROBLAST GROWTH FACTOR"/>
    <property type="match status" value="1"/>
</dbReference>
<dbReference type="Pfam" id="PF00167">
    <property type="entry name" value="FGF"/>
    <property type="match status" value="1"/>
</dbReference>
<dbReference type="PRINTS" id="PR00263">
    <property type="entry name" value="HBGFFGF"/>
</dbReference>
<dbReference type="PRINTS" id="PR00262">
    <property type="entry name" value="IL1HBGF"/>
</dbReference>
<dbReference type="SMART" id="SM00442">
    <property type="entry name" value="FGF"/>
    <property type="match status" value="1"/>
</dbReference>
<dbReference type="SUPFAM" id="SSF50353">
    <property type="entry name" value="Cytokine"/>
    <property type="match status" value="1"/>
</dbReference>
<dbReference type="PROSITE" id="PS00247">
    <property type="entry name" value="HBGF_FGF"/>
    <property type="match status" value="1"/>
</dbReference>
<evidence type="ECO:0000250" key="1"/>
<evidence type="ECO:0000250" key="2">
    <source>
        <dbReference type="UniProtKB" id="P09038"/>
    </source>
</evidence>
<evidence type="ECO:0000250" key="3">
    <source>
        <dbReference type="UniProtKB" id="P13109"/>
    </source>
</evidence>
<evidence type="ECO:0000269" key="4">
    <source>
    </source>
</evidence>
<evidence type="ECO:0000269" key="5">
    <source>
    </source>
</evidence>
<evidence type="ECO:0000269" key="6">
    <source>
    </source>
</evidence>
<evidence type="ECO:0000305" key="7"/>
<comment type="function">
    <text evidence="2">Acts as a ligand for FGFR1, FGFR2, FGFR3 and FGFR4 (By similarity). Also acts as an integrin ligand which is required for FGF2 signaling (By similarity). Binds to integrin ITGAV:ITGB3 (By similarity). Plays an important role in the regulation of cell survival, cell division, cell differentiation and cell migration (By similarity). Functions as a potent mitogen in vitro (By similarity). Can induce angiogenesis (By similarity). Mediates phosphorylation of ERK1/2 and thereby promotes retinal lens fiber differentiation (By similarity).</text>
</comment>
<comment type="subunit">
    <text evidence="2 3 4 5 6">Monomer. Homodimer. Interacts with FGFR1, FGFR2, FGFR3 and FGFR4. Affinity between fibroblast growth factors (FGFs) and their receptors is increased by heparan sulfate glycosaminoglycans that function as coreceptors. Interacts with CSPG4, FGFBP1 and TEC. Found in a complex with FGFBP1, FGF1 and FGF2 (By similarity). Interacts with FGFBP3 (PubMed:20851768). Interacts with integrin ITGAV:ITGB3; the interaction is required for FGF2 signaling (By similarity). Interacts with SNORC (via the extracellular domain) (PubMed:28323137). Interacts with glypican GPC3 (By similarity).</text>
</comment>
<comment type="subcellular location">
    <subcellularLocation>
        <location evidence="2">Secreted</location>
    </subcellularLocation>
    <subcellularLocation>
        <location evidence="2">Nucleus</location>
    </subcellularLocation>
    <text evidence="2">Exported from cells by an endoplasmic reticulum (ER)/Golgi-independent mechanism (By similarity). Unconventional secretion of FGF2 occurs by direct translocation across the plasma membrane (By similarity). Binding of exogenous FGF2 to FGFR facilitates endocytosis followed by translocation of FGF2 across endosomal membrane into the cytosol (By similarity). Nuclear import from the cytosol requires the classical nuclear import machinery, involving proteins KPNA1 and KPNB1, as well as CEP57 (By similarity).</text>
</comment>
<comment type="PTM">
    <text evidence="1">Phosphorylation at Tyr-81 regulates FGF2 unconventional secretion.</text>
</comment>
<comment type="similarity">
    <text evidence="7">Belongs to the heparin-binding growth factors family.</text>
</comment>
<reference key="1">
    <citation type="journal article" date="1990" name="Dev. Biol.">
        <title>Isolation of cDNAs encoding four mouse FGF family members and characterization of their expression patterns during embryogenesis.</title>
        <authorList>
            <person name="Hebert J.M."/>
            <person name="Basilico C."/>
            <person name="Goldfarb M."/>
            <person name="Haub O."/>
            <person name="Martin G.R."/>
        </authorList>
    </citation>
    <scope>NUCLEOTIDE SEQUENCE [MRNA]</scope>
</reference>
<reference key="2">
    <citation type="submission" date="1998-05" db="EMBL/GenBank/DDBJ databases">
        <authorList>
            <person name="Ma R.Z."/>
            <person name="Teuscher C."/>
        </authorList>
    </citation>
    <scope>NUCLEOTIDE SEQUENCE [MRNA]</scope>
    <source>
        <strain>A/J</strain>
        <strain>C57BL/6J</strain>
        <strain>NOD/LtJ</strain>
        <tissue>Spleen</tissue>
    </source>
</reference>
<reference key="3">
    <citation type="journal article" date="1997" name="Oncogene">
        <title>Expression of a binding protein for FGF is associated with epithelial development and skin carcinogenesis.</title>
        <authorList>
            <person name="Kurtz A."/>
            <person name="Wang H.-L."/>
            <person name="Darwiche N."/>
            <person name="Harris V."/>
            <person name="Wellstein A."/>
        </authorList>
    </citation>
    <scope>INTERACTION WITH FGF2</scope>
</reference>
<reference key="4">
    <citation type="journal article" date="2011" name="Mol. Cell. Neurosci.">
        <title>Inactivation of fibroblast growth factor binding protein 3 causes anxiety-related behaviors.</title>
        <authorList>
            <person name="Yamanaka Y."/>
            <person name="Kitano A."/>
            <person name="Takao K."/>
            <person name="Prasansuklab A."/>
            <person name="Mushiroda T."/>
            <person name="Yamazaki K."/>
            <person name="Kumada T."/>
            <person name="Shibata M."/>
            <person name="Takaoka Y."/>
            <person name="Awaya T."/>
            <person name="Kato T."/>
            <person name="Abe T."/>
            <person name="Iwata N."/>
            <person name="Miyakawa T."/>
            <person name="Nakamura Y."/>
            <person name="Nakahata T."/>
            <person name="Heike T."/>
        </authorList>
    </citation>
    <scope>INTERACTION WITH FGFBP3</scope>
</reference>
<reference key="5">
    <citation type="journal article" date="2017" name="Osteoarthritis Cartilage">
        <title>Defects in chondrocyte maturation and secondary ossification in mouse knee joint epiphyses due to Snorc deficiency.</title>
        <authorList>
            <person name="Heinonen J."/>
            <person name="Zhang F.P."/>
            <person name="Surmann-Schmitt C."/>
            <person name="Honkala S."/>
            <person name="Stock M."/>
            <person name="Poutanen M."/>
            <person name="Saeaemaenen A.M."/>
        </authorList>
    </citation>
    <scope>INTERACTION WITH SNORC</scope>
</reference>
<gene>
    <name type="primary">Fgf2</name>
    <name type="synonym">Fgf-2</name>
</gene>
<proteinExistence type="evidence at protein level"/>
<organism>
    <name type="scientific">Mus musculus</name>
    <name type="common">Mouse</name>
    <dbReference type="NCBI Taxonomy" id="10090"/>
    <lineage>
        <taxon>Eukaryota</taxon>
        <taxon>Metazoa</taxon>
        <taxon>Chordata</taxon>
        <taxon>Craniata</taxon>
        <taxon>Vertebrata</taxon>
        <taxon>Euteleostomi</taxon>
        <taxon>Mammalia</taxon>
        <taxon>Eutheria</taxon>
        <taxon>Euarchontoglires</taxon>
        <taxon>Glires</taxon>
        <taxon>Rodentia</taxon>
        <taxon>Myomorpha</taxon>
        <taxon>Muroidea</taxon>
        <taxon>Muridae</taxon>
        <taxon>Murinae</taxon>
        <taxon>Mus</taxon>
        <taxon>Mus</taxon>
    </lineage>
</organism>
<feature type="propeptide" id="PRO_0000008936">
    <location>
        <begin position="1"/>
        <end position="9"/>
    </location>
</feature>
<feature type="chain" id="PRO_0000008937" description="Fibroblast growth factor 2">
    <location>
        <begin position="10"/>
        <end position="154"/>
    </location>
</feature>
<feature type="region of interest" description="Heparin-binding" evidence="1">
    <location>
        <begin position="127"/>
        <end position="143"/>
    </location>
</feature>
<feature type="binding site" evidence="1">
    <location>
        <position position="35"/>
    </location>
    <ligand>
        <name>heparin</name>
        <dbReference type="ChEBI" id="CHEBI:28304"/>
    </ligand>
</feature>
<feature type="site" description="Important for interaction with integrin" evidence="2">
    <location>
        <position position="127"/>
    </location>
</feature>
<feature type="site" description="Important for interaction with integrin" evidence="2">
    <location>
        <position position="128"/>
    </location>
</feature>
<feature type="site" description="Important for interaction with integrin" evidence="2">
    <location>
        <position position="133"/>
    </location>
</feature>
<feature type="modified residue" description="Phosphotyrosine; by TEC" evidence="2">
    <location>
        <position position="81"/>
    </location>
</feature>
<feature type="cross-link" description="Glycyl lysine isopeptide (Lys-Gly) (interchain with G-Cter in SUMO1)" evidence="2">
    <location>
        <position position="94"/>
    </location>
</feature>
<sequence>MAASGITSLPALPEDGGAAFPPGHFKDPKRLYCKNGGFFLRIHPDGRVDGVREKSDPHVKLQLQAEERGVVSIKGVCANRYLAMKEDGRLLASKCVTEECFFFERLESNNYNTYRSRKYSSWYVALKRTGQYKLGSKTGPGQKAILFLPMSAKS</sequence>
<protein>
    <recommendedName>
        <fullName>Fibroblast growth factor 2</fullName>
        <shortName>FGF-2</shortName>
    </recommendedName>
    <alternativeName>
        <fullName>Basic fibroblast growth factor</fullName>
        <shortName>bFGF</shortName>
    </alternativeName>
    <alternativeName>
        <fullName>Heparin-binding growth factor 2</fullName>
        <shortName>HBGF-2</shortName>
    </alternativeName>
</protein>
<accession>P15655</accession>
<name>FGF2_MOUSE</name>
<keyword id="KW-0037">Angiogenesis</keyword>
<keyword id="KW-0217">Developmental protein</keyword>
<keyword id="KW-0221">Differentiation</keyword>
<keyword id="KW-0339">Growth factor</keyword>
<keyword id="KW-0358">Heparin-binding</keyword>
<keyword id="KW-1017">Isopeptide bond</keyword>
<keyword id="KW-0497">Mitogen</keyword>
<keyword id="KW-0539">Nucleus</keyword>
<keyword id="KW-0597">Phosphoprotein</keyword>
<keyword id="KW-1185">Reference proteome</keyword>
<keyword id="KW-0964">Secreted</keyword>
<keyword id="KW-0832">Ubl conjugation</keyword>